<sequence length="297" mass="32190">MSAKETIEKLQNARIITALVTPFKENGQINFGAFPKLIEDLLANHTEGLILAGTTAESPTLTHDEELAIFAAVNKIVDGRIPLIAGVGTNDTRDSVEFVKEVAELGYIDAGLAVTPYYNKPSQEGIYQHFKAIATASDLPIILYNIPGRVVTEIQVETILRLAELENVIAIKECTNTDNLAYLIEKLPKDFLVYTGEDGLAFHTKALGGQGVISVASHILGQEFFEMFAEIDQGSIQKAAAIQRKILPKINALFSVTSPAPIKTVLNAKGYEVGGLRLPLVACTTEESKIILEKIGN</sequence>
<reference key="1">
    <citation type="journal article" date="2001" name="Genome Res.">
        <title>The complete genome sequence of the lactic acid bacterium Lactococcus lactis ssp. lactis IL1403.</title>
        <authorList>
            <person name="Bolotin A."/>
            <person name="Wincker P."/>
            <person name="Mauger S."/>
            <person name="Jaillon O."/>
            <person name="Malarme K."/>
            <person name="Weissenbach J."/>
            <person name="Ehrlich S.D."/>
            <person name="Sorokin A."/>
        </authorList>
    </citation>
    <scope>NUCLEOTIDE SEQUENCE [LARGE SCALE GENOMIC DNA]</scope>
    <source>
        <strain>IL1403</strain>
    </source>
</reference>
<accession>Q9CF61</accession>
<dbReference type="EC" id="4.3.3.7" evidence="1"/>
<dbReference type="EMBL" id="AE005176">
    <property type="protein sequence ID" value="AAK05718.1"/>
    <property type="molecule type" value="Genomic_DNA"/>
</dbReference>
<dbReference type="PIR" id="D86827">
    <property type="entry name" value="D86827"/>
</dbReference>
<dbReference type="RefSeq" id="NP_267776.1">
    <property type="nucleotide sequence ID" value="NC_002662.1"/>
</dbReference>
<dbReference type="RefSeq" id="WP_003129414.1">
    <property type="nucleotide sequence ID" value="NC_002662.1"/>
</dbReference>
<dbReference type="SMR" id="Q9CF61"/>
<dbReference type="PaxDb" id="272623-L0093"/>
<dbReference type="EnsemblBacteria" id="AAK05718">
    <property type="protein sequence ID" value="AAK05718"/>
    <property type="gene ID" value="L0093"/>
</dbReference>
<dbReference type="KEGG" id="lla:L0093"/>
<dbReference type="PATRIC" id="fig|272623.7.peg.1741"/>
<dbReference type="eggNOG" id="COG0329">
    <property type="taxonomic scope" value="Bacteria"/>
</dbReference>
<dbReference type="HOGENOM" id="CLU_049343_7_1_9"/>
<dbReference type="OrthoDB" id="9782828at2"/>
<dbReference type="UniPathway" id="UPA00034">
    <property type="reaction ID" value="UER00017"/>
</dbReference>
<dbReference type="Proteomes" id="UP000002196">
    <property type="component" value="Chromosome"/>
</dbReference>
<dbReference type="GO" id="GO:0005829">
    <property type="term" value="C:cytosol"/>
    <property type="evidence" value="ECO:0007669"/>
    <property type="project" value="TreeGrafter"/>
</dbReference>
<dbReference type="GO" id="GO:0008840">
    <property type="term" value="F:4-hydroxy-tetrahydrodipicolinate synthase activity"/>
    <property type="evidence" value="ECO:0007669"/>
    <property type="project" value="UniProtKB-UniRule"/>
</dbReference>
<dbReference type="GO" id="GO:0019877">
    <property type="term" value="P:diaminopimelate biosynthetic process"/>
    <property type="evidence" value="ECO:0007669"/>
    <property type="project" value="UniProtKB-UniRule"/>
</dbReference>
<dbReference type="GO" id="GO:0009089">
    <property type="term" value="P:lysine biosynthetic process via diaminopimelate"/>
    <property type="evidence" value="ECO:0007669"/>
    <property type="project" value="UniProtKB-UniRule"/>
</dbReference>
<dbReference type="CDD" id="cd00950">
    <property type="entry name" value="DHDPS"/>
    <property type="match status" value="1"/>
</dbReference>
<dbReference type="Gene3D" id="3.20.20.70">
    <property type="entry name" value="Aldolase class I"/>
    <property type="match status" value="1"/>
</dbReference>
<dbReference type="HAMAP" id="MF_00418">
    <property type="entry name" value="DapA"/>
    <property type="match status" value="1"/>
</dbReference>
<dbReference type="InterPro" id="IPR013785">
    <property type="entry name" value="Aldolase_TIM"/>
</dbReference>
<dbReference type="InterPro" id="IPR005263">
    <property type="entry name" value="DapA"/>
</dbReference>
<dbReference type="InterPro" id="IPR002220">
    <property type="entry name" value="DapA-like"/>
</dbReference>
<dbReference type="InterPro" id="IPR020625">
    <property type="entry name" value="Schiff_base-form_aldolases_AS"/>
</dbReference>
<dbReference type="NCBIfam" id="TIGR00674">
    <property type="entry name" value="dapA"/>
    <property type="match status" value="1"/>
</dbReference>
<dbReference type="PANTHER" id="PTHR12128:SF66">
    <property type="entry name" value="4-HYDROXY-2-OXOGLUTARATE ALDOLASE, MITOCHONDRIAL"/>
    <property type="match status" value="1"/>
</dbReference>
<dbReference type="PANTHER" id="PTHR12128">
    <property type="entry name" value="DIHYDRODIPICOLINATE SYNTHASE"/>
    <property type="match status" value="1"/>
</dbReference>
<dbReference type="Pfam" id="PF00701">
    <property type="entry name" value="DHDPS"/>
    <property type="match status" value="1"/>
</dbReference>
<dbReference type="PIRSF" id="PIRSF001365">
    <property type="entry name" value="DHDPS"/>
    <property type="match status" value="1"/>
</dbReference>
<dbReference type="PRINTS" id="PR00146">
    <property type="entry name" value="DHPICSNTHASE"/>
</dbReference>
<dbReference type="SMART" id="SM01130">
    <property type="entry name" value="DHDPS"/>
    <property type="match status" value="1"/>
</dbReference>
<dbReference type="SUPFAM" id="SSF51569">
    <property type="entry name" value="Aldolase"/>
    <property type="match status" value="1"/>
</dbReference>
<dbReference type="PROSITE" id="PS00666">
    <property type="entry name" value="DHDPS_2"/>
    <property type="match status" value="1"/>
</dbReference>
<comment type="function">
    <text evidence="1">Catalyzes the condensation of (S)-aspartate-beta-semialdehyde [(S)-ASA] and pyruvate to 4-hydroxy-tetrahydrodipicolinate (HTPA).</text>
</comment>
<comment type="catalytic activity">
    <reaction evidence="1">
        <text>L-aspartate 4-semialdehyde + pyruvate = (2S,4S)-4-hydroxy-2,3,4,5-tetrahydrodipicolinate + H2O + H(+)</text>
        <dbReference type="Rhea" id="RHEA:34171"/>
        <dbReference type="ChEBI" id="CHEBI:15361"/>
        <dbReference type="ChEBI" id="CHEBI:15377"/>
        <dbReference type="ChEBI" id="CHEBI:15378"/>
        <dbReference type="ChEBI" id="CHEBI:67139"/>
        <dbReference type="ChEBI" id="CHEBI:537519"/>
        <dbReference type="EC" id="4.3.3.7"/>
    </reaction>
</comment>
<comment type="pathway">
    <text evidence="1">Amino-acid biosynthesis; L-lysine biosynthesis via DAP pathway; (S)-tetrahydrodipicolinate from L-aspartate: step 3/4.</text>
</comment>
<comment type="subunit">
    <text evidence="1">Homotetramer; dimer of dimers.</text>
</comment>
<comment type="subcellular location">
    <subcellularLocation>
        <location evidence="1">Cytoplasm</location>
    </subcellularLocation>
</comment>
<comment type="similarity">
    <text evidence="1">Belongs to the DapA family.</text>
</comment>
<comment type="caution">
    <text evidence="2">Was originally thought to be a dihydrodipicolinate synthase (DHDPS), catalyzing the condensation of (S)-aspartate-beta-semialdehyde [(S)-ASA] and pyruvate to dihydrodipicolinate (DHDP). However, it was shown in E.coli that the product of the enzymatic reaction is not dihydrodipicolinate but in fact (4S)-4-hydroxy-2,3,4,5-tetrahydro-(2S)-dipicolinic acid (HTPA), and that the consecutive dehydration reaction leading to DHDP is not spontaneous but catalyzed by DapB.</text>
</comment>
<feature type="chain" id="PRO_0000103120" description="4-hydroxy-tetrahydrodipicolinate synthase">
    <location>
        <begin position="1"/>
        <end position="297"/>
    </location>
</feature>
<feature type="active site" description="Proton donor/acceptor" evidence="1">
    <location>
        <position position="144"/>
    </location>
</feature>
<feature type="active site" description="Schiff-base intermediate with substrate" evidence="1">
    <location>
        <position position="172"/>
    </location>
</feature>
<feature type="binding site" evidence="1">
    <location>
        <position position="55"/>
    </location>
    <ligand>
        <name>pyruvate</name>
        <dbReference type="ChEBI" id="CHEBI:15361"/>
    </ligand>
</feature>
<feature type="binding site" evidence="1">
    <location>
        <position position="213"/>
    </location>
    <ligand>
        <name>pyruvate</name>
        <dbReference type="ChEBI" id="CHEBI:15361"/>
    </ligand>
</feature>
<feature type="site" description="Part of a proton relay during catalysis" evidence="1">
    <location>
        <position position="54"/>
    </location>
</feature>
<feature type="site" description="Part of a proton relay during catalysis" evidence="1">
    <location>
        <position position="118"/>
    </location>
</feature>
<gene>
    <name evidence="1" type="primary">dapA</name>
    <name type="ordered locus">LL1620</name>
    <name type="ORF">L0093</name>
</gene>
<proteinExistence type="inferred from homology"/>
<organism>
    <name type="scientific">Lactococcus lactis subsp. lactis (strain IL1403)</name>
    <name type="common">Streptococcus lactis</name>
    <dbReference type="NCBI Taxonomy" id="272623"/>
    <lineage>
        <taxon>Bacteria</taxon>
        <taxon>Bacillati</taxon>
        <taxon>Bacillota</taxon>
        <taxon>Bacilli</taxon>
        <taxon>Lactobacillales</taxon>
        <taxon>Streptococcaceae</taxon>
        <taxon>Lactococcus</taxon>
    </lineage>
</organism>
<keyword id="KW-0028">Amino-acid biosynthesis</keyword>
<keyword id="KW-0963">Cytoplasm</keyword>
<keyword id="KW-0220">Diaminopimelate biosynthesis</keyword>
<keyword id="KW-0456">Lyase</keyword>
<keyword id="KW-0457">Lysine biosynthesis</keyword>
<keyword id="KW-1185">Reference proteome</keyword>
<keyword id="KW-0704">Schiff base</keyword>
<protein>
    <recommendedName>
        <fullName evidence="1">4-hydroxy-tetrahydrodipicolinate synthase</fullName>
        <shortName evidence="1">HTPA synthase</shortName>
        <ecNumber evidence="1">4.3.3.7</ecNumber>
    </recommendedName>
</protein>
<name>DAPA_LACLA</name>
<evidence type="ECO:0000255" key="1">
    <source>
        <dbReference type="HAMAP-Rule" id="MF_00418"/>
    </source>
</evidence>
<evidence type="ECO:0000305" key="2"/>